<accession>A5WA99</accession>
<sequence>MDASTINSLFLIGALLVGASILVSSLSSRLGIPILVIILAVGMLAGVDGGGIIFNNYPTAYLVGNLALAVILLDGGLRTRVASFRVALWPALSLATVGVMITTALTGLIAAWLFNLSLIQGLLIGAIVGSTDAAAVFSLLGGKGLNERVSATLEIESGSNDPMAVFLTVTLIDMIASGETGLHWSLLGHLLREFGIGTLLGLGGGWLMLQLVNRINLAGGLYPILVVAGGLVMFSLTNALHGSGFLAVYLCGLVLGNKPIRSRHGILHMLDGMAWLAQIGMFLVLGLLVTPHDLLPIALPALGLALWMILVARPLSVVAALLPFKAFHGREKGFISWVGLRGAVPIILAVFPLMAGLPDAQLFFNLAFFIVLVSLLVQGTSLPWVAKLLKVTVPPDPAPISRSALEVHITSEWEMFVYRLGAEKWCIGAALRELKMPEGTRIAALFRGEQLLHPSGSTVLEVGDMLCVIGHEHNLPALGKLFSQAPQRGLDLRFFGDFVLEGDAELGAVAALYGLKLDGLDAKMPLAQFIRQKVGGAPVVGDQVEWHGTIWTVATMDGNKIQKVGVRFPEGTRPGPGLFL</sequence>
<feature type="chain" id="PRO_1000064670" description="K(+)/H(+) antiporter NhaP2">
    <location>
        <begin position="1"/>
        <end position="580"/>
    </location>
</feature>
<feature type="transmembrane region" description="Helical" evidence="1">
    <location>
        <begin position="6"/>
        <end position="26"/>
    </location>
</feature>
<feature type="transmembrane region" description="Helical" evidence="1">
    <location>
        <begin position="34"/>
        <end position="54"/>
    </location>
</feature>
<feature type="transmembrane region" description="Helical" evidence="1">
    <location>
        <begin position="57"/>
        <end position="77"/>
    </location>
</feature>
<feature type="transmembrane region" description="Helical" evidence="1">
    <location>
        <begin position="86"/>
        <end position="106"/>
    </location>
</feature>
<feature type="transmembrane region" description="Helical" evidence="1">
    <location>
        <begin position="108"/>
        <end position="128"/>
    </location>
</feature>
<feature type="transmembrane region" description="Helical" evidence="1">
    <location>
        <begin position="162"/>
        <end position="182"/>
    </location>
</feature>
<feature type="transmembrane region" description="Helical" evidence="1">
    <location>
        <begin position="193"/>
        <end position="213"/>
    </location>
</feature>
<feature type="transmembrane region" description="Helical" evidence="1">
    <location>
        <begin position="217"/>
        <end position="237"/>
    </location>
</feature>
<feature type="transmembrane region" description="Helical" evidence="1">
    <location>
        <begin position="240"/>
        <end position="260"/>
    </location>
</feature>
<feature type="transmembrane region" description="Helical" evidence="1">
    <location>
        <begin position="269"/>
        <end position="289"/>
    </location>
</feature>
<feature type="transmembrane region" description="Helical" evidence="1">
    <location>
        <begin position="292"/>
        <end position="312"/>
    </location>
</feature>
<feature type="transmembrane region" description="Helical" evidence="1">
    <location>
        <begin position="334"/>
        <end position="354"/>
    </location>
</feature>
<feature type="transmembrane region" description="Helical" evidence="1">
    <location>
        <begin position="362"/>
        <end position="382"/>
    </location>
</feature>
<feature type="domain" description="RCK C-terminal" evidence="1">
    <location>
        <begin position="402"/>
        <end position="484"/>
    </location>
</feature>
<proteinExistence type="inferred from homology"/>
<protein>
    <recommendedName>
        <fullName evidence="1">K(+)/H(+) antiporter NhaP2</fullName>
    </recommendedName>
    <alternativeName>
        <fullName evidence="1">Potassium/proton antiporter NhaP2</fullName>
    </alternativeName>
</protein>
<comment type="function">
    <text evidence="1">K(+)/H(+) antiporter that extrudes potassium in exchange for external protons and maintains the internal concentration of potassium under toxic levels.</text>
</comment>
<comment type="catalytic activity">
    <reaction evidence="1">
        <text>K(+)(in) + H(+)(out) = K(+)(out) + H(+)(in)</text>
        <dbReference type="Rhea" id="RHEA:29467"/>
        <dbReference type="ChEBI" id="CHEBI:15378"/>
        <dbReference type="ChEBI" id="CHEBI:29103"/>
    </reaction>
    <physiologicalReaction direction="left-to-right" evidence="1">
        <dbReference type="Rhea" id="RHEA:29468"/>
    </physiologicalReaction>
</comment>
<comment type="subcellular location">
    <subcellularLocation>
        <location evidence="1">Cell inner membrane</location>
        <topology evidence="1">Multi-pass membrane protein</topology>
    </subcellularLocation>
</comment>
<comment type="similarity">
    <text evidence="1">Belongs to the monovalent cation:proton antiporter 1 (CPA1) transporter (TC 2.A.36) family. NhaP2 subfamily.</text>
</comment>
<dbReference type="EMBL" id="CP000712">
    <property type="protein sequence ID" value="ABQ81059.1"/>
    <property type="molecule type" value="Genomic_DNA"/>
</dbReference>
<dbReference type="SMR" id="A5WA99"/>
<dbReference type="KEGG" id="ppf:Pput_4939"/>
<dbReference type="eggNOG" id="COG3263">
    <property type="taxonomic scope" value="Bacteria"/>
</dbReference>
<dbReference type="HOGENOM" id="CLU_005912_9_2_6"/>
<dbReference type="GO" id="GO:0005886">
    <property type="term" value="C:plasma membrane"/>
    <property type="evidence" value="ECO:0007669"/>
    <property type="project" value="UniProtKB-SubCell"/>
</dbReference>
<dbReference type="GO" id="GO:0050660">
    <property type="term" value="F:flavin adenine dinucleotide binding"/>
    <property type="evidence" value="ECO:0007669"/>
    <property type="project" value="InterPro"/>
</dbReference>
<dbReference type="GO" id="GO:0015386">
    <property type="term" value="F:potassium:proton antiporter activity"/>
    <property type="evidence" value="ECO:0007669"/>
    <property type="project" value="UniProtKB-UniRule"/>
</dbReference>
<dbReference type="GO" id="GO:0006884">
    <property type="term" value="P:cell volume homeostasis"/>
    <property type="evidence" value="ECO:0007669"/>
    <property type="project" value="InterPro"/>
</dbReference>
<dbReference type="Gene3D" id="1.20.1530.20">
    <property type="match status" value="1"/>
</dbReference>
<dbReference type="Gene3D" id="3.30.465.10">
    <property type="match status" value="1"/>
</dbReference>
<dbReference type="Gene3D" id="3.30.70.1450">
    <property type="entry name" value="Regulator of K+ conductance, C-terminal domain"/>
    <property type="match status" value="1"/>
</dbReference>
<dbReference type="HAMAP" id="MF_01075">
    <property type="entry name" value="NhaP2"/>
    <property type="match status" value="1"/>
</dbReference>
<dbReference type="InterPro" id="IPR006153">
    <property type="entry name" value="Cation/H_exchanger_TM"/>
</dbReference>
<dbReference type="InterPro" id="IPR036318">
    <property type="entry name" value="FAD-bd_PCMH-like_sf"/>
</dbReference>
<dbReference type="InterPro" id="IPR016169">
    <property type="entry name" value="FAD-bd_PCMH_sub2"/>
</dbReference>
<dbReference type="InterPro" id="IPR038770">
    <property type="entry name" value="Na+/solute_symporter_sf"/>
</dbReference>
<dbReference type="InterPro" id="IPR023729">
    <property type="entry name" value="NhaP2"/>
</dbReference>
<dbReference type="InterPro" id="IPR006037">
    <property type="entry name" value="RCK_C"/>
</dbReference>
<dbReference type="InterPro" id="IPR036721">
    <property type="entry name" value="RCK_C_sf"/>
</dbReference>
<dbReference type="InterPro" id="IPR005170">
    <property type="entry name" value="Transptr-assoc_dom"/>
</dbReference>
<dbReference type="NCBIfam" id="NF003714">
    <property type="entry name" value="PRK05326.1-1"/>
    <property type="match status" value="1"/>
</dbReference>
<dbReference type="NCBIfam" id="NF003715">
    <property type="entry name" value="PRK05326.1-2"/>
    <property type="match status" value="1"/>
</dbReference>
<dbReference type="NCBIfam" id="NF003716">
    <property type="entry name" value="PRK05326.1-3"/>
    <property type="match status" value="1"/>
</dbReference>
<dbReference type="PANTHER" id="PTHR32507:SF7">
    <property type="entry name" value="K(+)_H(+) ANTIPORTER NHAP2"/>
    <property type="match status" value="1"/>
</dbReference>
<dbReference type="PANTHER" id="PTHR32507">
    <property type="entry name" value="NA(+)/H(+) ANTIPORTER 1"/>
    <property type="match status" value="1"/>
</dbReference>
<dbReference type="Pfam" id="PF03471">
    <property type="entry name" value="CorC_HlyC"/>
    <property type="match status" value="1"/>
</dbReference>
<dbReference type="Pfam" id="PF00999">
    <property type="entry name" value="Na_H_Exchanger"/>
    <property type="match status" value="1"/>
</dbReference>
<dbReference type="Pfam" id="PF02080">
    <property type="entry name" value="TrkA_C"/>
    <property type="match status" value="1"/>
</dbReference>
<dbReference type="SMART" id="SM01091">
    <property type="entry name" value="CorC_HlyC"/>
    <property type="match status" value="1"/>
</dbReference>
<dbReference type="SUPFAM" id="SSF56176">
    <property type="entry name" value="FAD-binding/transporter-associated domain-like"/>
    <property type="match status" value="1"/>
</dbReference>
<dbReference type="SUPFAM" id="SSF116726">
    <property type="entry name" value="TrkA C-terminal domain-like"/>
    <property type="match status" value="1"/>
</dbReference>
<dbReference type="PROSITE" id="PS51202">
    <property type="entry name" value="RCK_C"/>
    <property type="match status" value="1"/>
</dbReference>
<organism>
    <name type="scientific">Pseudomonas putida (strain ATCC 700007 / DSM 6899 / JCM 31910 / BCRC 17059 / LMG 24140 / F1)</name>
    <dbReference type="NCBI Taxonomy" id="351746"/>
    <lineage>
        <taxon>Bacteria</taxon>
        <taxon>Pseudomonadati</taxon>
        <taxon>Pseudomonadota</taxon>
        <taxon>Gammaproteobacteria</taxon>
        <taxon>Pseudomonadales</taxon>
        <taxon>Pseudomonadaceae</taxon>
        <taxon>Pseudomonas</taxon>
    </lineage>
</organism>
<name>NHAP2_PSEP1</name>
<evidence type="ECO:0000255" key="1">
    <source>
        <dbReference type="HAMAP-Rule" id="MF_01075"/>
    </source>
</evidence>
<keyword id="KW-0050">Antiport</keyword>
<keyword id="KW-0997">Cell inner membrane</keyword>
<keyword id="KW-1003">Cell membrane</keyword>
<keyword id="KW-0406">Ion transport</keyword>
<keyword id="KW-0472">Membrane</keyword>
<keyword id="KW-0630">Potassium</keyword>
<keyword id="KW-0633">Potassium transport</keyword>
<keyword id="KW-0812">Transmembrane</keyword>
<keyword id="KW-1133">Transmembrane helix</keyword>
<keyword id="KW-0813">Transport</keyword>
<gene>
    <name evidence="1" type="primary">nhaP2</name>
    <name type="synonym">cvrA</name>
    <name type="ordered locus">Pput_4939</name>
</gene>
<reference key="1">
    <citation type="submission" date="2007-05" db="EMBL/GenBank/DDBJ databases">
        <title>Complete sequence of Pseudomonas putida F1.</title>
        <authorList>
            <consortium name="US DOE Joint Genome Institute"/>
            <person name="Copeland A."/>
            <person name="Lucas S."/>
            <person name="Lapidus A."/>
            <person name="Barry K."/>
            <person name="Detter J.C."/>
            <person name="Glavina del Rio T."/>
            <person name="Hammon N."/>
            <person name="Israni S."/>
            <person name="Dalin E."/>
            <person name="Tice H."/>
            <person name="Pitluck S."/>
            <person name="Chain P."/>
            <person name="Malfatti S."/>
            <person name="Shin M."/>
            <person name="Vergez L."/>
            <person name="Schmutz J."/>
            <person name="Larimer F."/>
            <person name="Land M."/>
            <person name="Hauser L."/>
            <person name="Kyrpides N."/>
            <person name="Lykidis A."/>
            <person name="Parales R."/>
            <person name="Richardson P."/>
        </authorList>
    </citation>
    <scope>NUCLEOTIDE SEQUENCE [LARGE SCALE GENOMIC DNA]</scope>
    <source>
        <strain>ATCC 700007 / DSM 6899 / JCM 31910 / BCRC 17059 / LMG 24140 / F1</strain>
    </source>
</reference>